<comment type="function">
    <text evidence="1">Endonuclease that specifically degrades the RNA of RNA-DNA hybrids.</text>
</comment>
<comment type="catalytic activity">
    <reaction evidence="1">
        <text>Endonucleolytic cleavage to 5'-phosphomonoester.</text>
        <dbReference type="EC" id="3.1.26.4"/>
    </reaction>
</comment>
<comment type="cofactor">
    <cofactor evidence="1">
        <name>Mn(2+)</name>
        <dbReference type="ChEBI" id="CHEBI:29035"/>
    </cofactor>
    <cofactor evidence="1">
        <name>Mg(2+)</name>
        <dbReference type="ChEBI" id="CHEBI:18420"/>
    </cofactor>
    <text evidence="1">Manganese or magnesium. Binds 1 divalent metal ion per monomer in the absence of substrate. May bind a second metal ion after substrate binding.</text>
</comment>
<comment type="subcellular location">
    <subcellularLocation>
        <location evidence="1">Cytoplasm</location>
    </subcellularLocation>
</comment>
<comment type="similarity">
    <text evidence="1">Belongs to the RNase HII family.</text>
</comment>
<reference key="1">
    <citation type="journal article" date="2009" name="BMC Microbiol.">
        <title>The genome sequence of Geobacter metallireducens: features of metabolism, physiology and regulation common and dissimilar to Geobacter sulfurreducens.</title>
        <authorList>
            <person name="Aklujkar M."/>
            <person name="Krushkal J."/>
            <person name="DiBartolo G."/>
            <person name="Lapidus A."/>
            <person name="Land M.L."/>
            <person name="Lovley D.R."/>
        </authorList>
    </citation>
    <scope>NUCLEOTIDE SEQUENCE [LARGE SCALE GENOMIC DNA]</scope>
    <source>
        <strain>ATCC 53774 / DSM 7210 / GS-15</strain>
    </source>
</reference>
<dbReference type="EC" id="3.1.26.4" evidence="1"/>
<dbReference type="EMBL" id="CP000148">
    <property type="protein sequence ID" value="ABB33083.1"/>
    <property type="molecule type" value="Genomic_DNA"/>
</dbReference>
<dbReference type="RefSeq" id="WP_004514596.1">
    <property type="nucleotide sequence ID" value="NC_007517.1"/>
</dbReference>
<dbReference type="SMR" id="Q39RP1"/>
<dbReference type="STRING" id="269799.Gmet_2865"/>
<dbReference type="KEGG" id="gme:Gmet_2865"/>
<dbReference type="eggNOG" id="COG0164">
    <property type="taxonomic scope" value="Bacteria"/>
</dbReference>
<dbReference type="HOGENOM" id="CLU_036532_3_2_7"/>
<dbReference type="Proteomes" id="UP000007073">
    <property type="component" value="Chromosome"/>
</dbReference>
<dbReference type="GO" id="GO:0005737">
    <property type="term" value="C:cytoplasm"/>
    <property type="evidence" value="ECO:0007669"/>
    <property type="project" value="UniProtKB-SubCell"/>
</dbReference>
<dbReference type="GO" id="GO:0032299">
    <property type="term" value="C:ribonuclease H2 complex"/>
    <property type="evidence" value="ECO:0007669"/>
    <property type="project" value="TreeGrafter"/>
</dbReference>
<dbReference type="GO" id="GO:0030145">
    <property type="term" value="F:manganese ion binding"/>
    <property type="evidence" value="ECO:0007669"/>
    <property type="project" value="UniProtKB-UniRule"/>
</dbReference>
<dbReference type="GO" id="GO:0003723">
    <property type="term" value="F:RNA binding"/>
    <property type="evidence" value="ECO:0007669"/>
    <property type="project" value="InterPro"/>
</dbReference>
<dbReference type="GO" id="GO:0004523">
    <property type="term" value="F:RNA-DNA hybrid ribonuclease activity"/>
    <property type="evidence" value="ECO:0007669"/>
    <property type="project" value="UniProtKB-UniRule"/>
</dbReference>
<dbReference type="GO" id="GO:0043137">
    <property type="term" value="P:DNA replication, removal of RNA primer"/>
    <property type="evidence" value="ECO:0007669"/>
    <property type="project" value="TreeGrafter"/>
</dbReference>
<dbReference type="GO" id="GO:0006298">
    <property type="term" value="P:mismatch repair"/>
    <property type="evidence" value="ECO:0007669"/>
    <property type="project" value="TreeGrafter"/>
</dbReference>
<dbReference type="CDD" id="cd07182">
    <property type="entry name" value="RNase_HII_bacteria_HII_like"/>
    <property type="match status" value="1"/>
</dbReference>
<dbReference type="FunFam" id="3.30.420.10:FF:000006">
    <property type="entry name" value="Ribonuclease HII"/>
    <property type="match status" value="1"/>
</dbReference>
<dbReference type="Gene3D" id="3.30.420.10">
    <property type="entry name" value="Ribonuclease H-like superfamily/Ribonuclease H"/>
    <property type="match status" value="1"/>
</dbReference>
<dbReference type="HAMAP" id="MF_00052_B">
    <property type="entry name" value="RNase_HII_B"/>
    <property type="match status" value="1"/>
</dbReference>
<dbReference type="InterPro" id="IPR022898">
    <property type="entry name" value="RNase_HII"/>
</dbReference>
<dbReference type="InterPro" id="IPR001352">
    <property type="entry name" value="RNase_HII/HIII"/>
</dbReference>
<dbReference type="InterPro" id="IPR024567">
    <property type="entry name" value="RNase_HII/HIII_dom"/>
</dbReference>
<dbReference type="InterPro" id="IPR012337">
    <property type="entry name" value="RNaseH-like_sf"/>
</dbReference>
<dbReference type="InterPro" id="IPR036397">
    <property type="entry name" value="RNaseH_sf"/>
</dbReference>
<dbReference type="NCBIfam" id="NF000594">
    <property type="entry name" value="PRK00015.1-1"/>
    <property type="match status" value="1"/>
</dbReference>
<dbReference type="NCBIfam" id="NF000595">
    <property type="entry name" value="PRK00015.1-3"/>
    <property type="match status" value="1"/>
</dbReference>
<dbReference type="PANTHER" id="PTHR10954">
    <property type="entry name" value="RIBONUCLEASE H2 SUBUNIT A"/>
    <property type="match status" value="1"/>
</dbReference>
<dbReference type="PANTHER" id="PTHR10954:SF18">
    <property type="entry name" value="RIBONUCLEASE HII"/>
    <property type="match status" value="1"/>
</dbReference>
<dbReference type="Pfam" id="PF01351">
    <property type="entry name" value="RNase_HII"/>
    <property type="match status" value="1"/>
</dbReference>
<dbReference type="SUPFAM" id="SSF53098">
    <property type="entry name" value="Ribonuclease H-like"/>
    <property type="match status" value="1"/>
</dbReference>
<dbReference type="PROSITE" id="PS51975">
    <property type="entry name" value="RNASE_H_2"/>
    <property type="match status" value="1"/>
</dbReference>
<sequence>MRLPLFDDIGERSLWTFENLVSRNGFHAVAGVDEAGRGPLAGPVVAAAVILPQGAELPGVDDSKKLSAPKREHLFGLISGCALAVGVGVADHACIDRINILQATLRAMAEAVGQLAVPPDYLLIDGISTIPLNLPQKTIKKGDSSSISIASASIVAKVTRDRMMMEYDQQFPGYGFAEHKGYGCASHLAAIAELGPCPIHRKTFRGVKEHVAP</sequence>
<proteinExistence type="inferred from homology"/>
<evidence type="ECO:0000255" key="1">
    <source>
        <dbReference type="HAMAP-Rule" id="MF_00052"/>
    </source>
</evidence>
<evidence type="ECO:0000255" key="2">
    <source>
        <dbReference type="PROSITE-ProRule" id="PRU01319"/>
    </source>
</evidence>
<name>RNH2_GEOMG</name>
<gene>
    <name evidence="1" type="primary">rnhB</name>
    <name type="ordered locus">Gmet_2865</name>
</gene>
<keyword id="KW-0963">Cytoplasm</keyword>
<keyword id="KW-0255">Endonuclease</keyword>
<keyword id="KW-0378">Hydrolase</keyword>
<keyword id="KW-0464">Manganese</keyword>
<keyword id="KW-0479">Metal-binding</keyword>
<keyword id="KW-0540">Nuclease</keyword>
<keyword id="KW-1185">Reference proteome</keyword>
<accession>Q39RP1</accession>
<organism>
    <name type="scientific">Geobacter metallireducens (strain ATCC 53774 / DSM 7210 / GS-15)</name>
    <dbReference type="NCBI Taxonomy" id="269799"/>
    <lineage>
        <taxon>Bacteria</taxon>
        <taxon>Pseudomonadati</taxon>
        <taxon>Thermodesulfobacteriota</taxon>
        <taxon>Desulfuromonadia</taxon>
        <taxon>Geobacterales</taxon>
        <taxon>Geobacteraceae</taxon>
        <taxon>Geobacter</taxon>
    </lineage>
</organism>
<protein>
    <recommendedName>
        <fullName evidence="1">Ribonuclease HII</fullName>
        <shortName evidence="1">RNase HII</shortName>
        <ecNumber evidence="1">3.1.26.4</ecNumber>
    </recommendedName>
</protein>
<feature type="chain" id="PRO_0000235726" description="Ribonuclease HII">
    <location>
        <begin position="1"/>
        <end position="213"/>
    </location>
</feature>
<feature type="domain" description="RNase H type-2" evidence="2">
    <location>
        <begin position="27"/>
        <end position="213"/>
    </location>
</feature>
<feature type="binding site" evidence="1">
    <location>
        <position position="33"/>
    </location>
    <ligand>
        <name>a divalent metal cation</name>
        <dbReference type="ChEBI" id="CHEBI:60240"/>
    </ligand>
</feature>
<feature type="binding site" evidence="1">
    <location>
        <position position="34"/>
    </location>
    <ligand>
        <name>a divalent metal cation</name>
        <dbReference type="ChEBI" id="CHEBI:60240"/>
    </ligand>
</feature>
<feature type="binding site" evidence="1">
    <location>
        <position position="125"/>
    </location>
    <ligand>
        <name>a divalent metal cation</name>
        <dbReference type="ChEBI" id="CHEBI:60240"/>
    </ligand>
</feature>